<proteinExistence type="inferred from homology"/>
<organism>
    <name type="scientific">Bacteroides thetaiotaomicron (strain ATCC 29148 / DSM 2079 / JCM 5827 / CCUG 10774 / NCTC 10582 / VPI-5482 / E50)</name>
    <dbReference type="NCBI Taxonomy" id="226186"/>
    <lineage>
        <taxon>Bacteria</taxon>
        <taxon>Pseudomonadati</taxon>
        <taxon>Bacteroidota</taxon>
        <taxon>Bacteroidia</taxon>
        <taxon>Bacteroidales</taxon>
        <taxon>Bacteroidaceae</taxon>
        <taxon>Bacteroides</taxon>
    </lineage>
</organism>
<accession>Q9RQ15</accession>
<keyword id="KW-1185">Reference proteome</keyword>
<keyword id="KW-0687">Ribonucleoprotein</keyword>
<keyword id="KW-0689">Ribosomal protein</keyword>
<protein>
    <recommendedName>
        <fullName evidence="1">Small ribosomal subunit protein bS16</fullName>
    </recommendedName>
    <alternativeName>
        <fullName evidence="3">30S ribosomal protein S16</fullName>
    </alternativeName>
</protein>
<feature type="chain" id="PRO_0000167153" description="Small ribosomal subunit protein bS16">
    <location>
        <begin position="1"/>
        <end position="184"/>
    </location>
</feature>
<feature type="region of interest" description="Disordered" evidence="2">
    <location>
        <begin position="150"/>
        <end position="184"/>
    </location>
</feature>
<feature type="compositionally biased region" description="Basic and acidic residues" evidence="2">
    <location>
        <begin position="150"/>
        <end position="160"/>
    </location>
</feature>
<feature type="compositionally biased region" description="Acidic residues" evidence="2">
    <location>
        <begin position="164"/>
        <end position="173"/>
    </location>
</feature>
<feature type="compositionally biased region" description="Low complexity" evidence="2">
    <location>
        <begin position="174"/>
        <end position="184"/>
    </location>
</feature>
<evidence type="ECO:0000255" key="1">
    <source>
        <dbReference type="HAMAP-Rule" id="MF_00385"/>
    </source>
</evidence>
<evidence type="ECO:0000256" key="2">
    <source>
        <dbReference type="SAM" id="MobiDB-lite"/>
    </source>
</evidence>
<evidence type="ECO:0000305" key="3"/>
<sequence>MATRIRLQRHGRKSYAFYSIVIADSRAPRDGKFIEKIGTYNPNTNPATVDLNFDAALAWVLKGAQPSDTVRNILSREGVYMKKHLLGGVAKGAFGEAEAEAKFEAWKNNKQSGLAALKAKQDEEKKAEAKARLEAEKKINEVKAKALAEKKAAEAAEKAAAEAPAEEATEAPAEEAAATEAAAE</sequence>
<comment type="similarity">
    <text evidence="1">Belongs to the bacterial ribosomal protein bS16 family.</text>
</comment>
<dbReference type="EMBL" id="AF137263">
    <property type="protein sequence ID" value="AAF01482.1"/>
    <property type="molecule type" value="Genomic_DNA"/>
</dbReference>
<dbReference type="EMBL" id="AE015928">
    <property type="protein sequence ID" value="AAO76378.1"/>
    <property type="molecule type" value="Genomic_DNA"/>
</dbReference>
<dbReference type="RefSeq" id="NP_810184.1">
    <property type="nucleotide sequence ID" value="NC_004663.1"/>
</dbReference>
<dbReference type="RefSeq" id="WP_008763025.1">
    <property type="nucleotide sequence ID" value="NC_004663.1"/>
</dbReference>
<dbReference type="SMR" id="Q9RQ15"/>
<dbReference type="STRING" id="226186.BT_1271"/>
<dbReference type="PaxDb" id="226186-BT_1271"/>
<dbReference type="EnsemblBacteria" id="AAO76378">
    <property type="protein sequence ID" value="AAO76378"/>
    <property type="gene ID" value="BT_1271"/>
</dbReference>
<dbReference type="KEGG" id="bth:BT_1271"/>
<dbReference type="PATRIC" id="fig|226186.12.peg.1298"/>
<dbReference type="eggNOG" id="COG0228">
    <property type="taxonomic scope" value="Bacteria"/>
</dbReference>
<dbReference type="HOGENOM" id="CLU_100590_0_0_10"/>
<dbReference type="InParanoid" id="Q9RQ15"/>
<dbReference type="OrthoDB" id="9807878at2"/>
<dbReference type="Proteomes" id="UP000001414">
    <property type="component" value="Chromosome"/>
</dbReference>
<dbReference type="GO" id="GO:0005737">
    <property type="term" value="C:cytoplasm"/>
    <property type="evidence" value="ECO:0007669"/>
    <property type="project" value="UniProtKB-ARBA"/>
</dbReference>
<dbReference type="GO" id="GO:0015935">
    <property type="term" value="C:small ribosomal subunit"/>
    <property type="evidence" value="ECO:0000318"/>
    <property type="project" value="GO_Central"/>
</dbReference>
<dbReference type="GO" id="GO:0003735">
    <property type="term" value="F:structural constituent of ribosome"/>
    <property type="evidence" value="ECO:0000318"/>
    <property type="project" value="GO_Central"/>
</dbReference>
<dbReference type="GO" id="GO:0006412">
    <property type="term" value="P:translation"/>
    <property type="evidence" value="ECO:0007669"/>
    <property type="project" value="UniProtKB-UniRule"/>
</dbReference>
<dbReference type="FunFam" id="3.30.1320.10:FF:000006">
    <property type="entry name" value="30S ribosomal protein S16"/>
    <property type="match status" value="1"/>
</dbReference>
<dbReference type="Gene3D" id="3.30.1320.10">
    <property type="match status" value="1"/>
</dbReference>
<dbReference type="HAMAP" id="MF_00385">
    <property type="entry name" value="Ribosomal_bS16"/>
    <property type="match status" value="1"/>
</dbReference>
<dbReference type="InterPro" id="IPR000307">
    <property type="entry name" value="Ribosomal_bS16"/>
</dbReference>
<dbReference type="InterPro" id="IPR023803">
    <property type="entry name" value="Ribosomal_bS16_dom_sf"/>
</dbReference>
<dbReference type="NCBIfam" id="NF011094">
    <property type="entry name" value="PRK14521.1"/>
    <property type="match status" value="1"/>
</dbReference>
<dbReference type="NCBIfam" id="TIGR00002">
    <property type="entry name" value="S16"/>
    <property type="match status" value="1"/>
</dbReference>
<dbReference type="PANTHER" id="PTHR12919">
    <property type="entry name" value="30S RIBOSOMAL PROTEIN S16"/>
    <property type="match status" value="1"/>
</dbReference>
<dbReference type="PANTHER" id="PTHR12919:SF20">
    <property type="entry name" value="SMALL RIBOSOMAL SUBUNIT PROTEIN BS16M"/>
    <property type="match status" value="1"/>
</dbReference>
<dbReference type="Pfam" id="PF00886">
    <property type="entry name" value="Ribosomal_S16"/>
    <property type="match status" value="1"/>
</dbReference>
<dbReference type="SUPFAM" id="SSF54565">
    <property type="entry name" value="Ribosomal protein S16"/>
    <property type="match status" value="1"/>
</dbReference>
<reference key="1">
    <citation type="journal article" date="1999" name="Proc. Natl. Acad. Sci. U.S.A.">
        <title>A molecular sensor that allows a gut commensal to control its nutrient foundation in a competitive ecosystem.</title>
        <authorList>
            <person name="Hooper L.V."/>
            <person name="Xu J."/>
            <person name="Falk P.G."/>
            <person name="Midtvedt T."/>
            <person name="Gordon J.I."/>
        </authorList>
    </citation>
    <scope>NUCLEOTIDE SEQUENCE [GENOMIC DNA]</scope>
    <source>
        <strain>ATCC 29148 / DSM 2079 / JCM 5827 / CCUG 10774 / NCTC 10582 / VPI-5482 / E50</strain>
    </source>
</reference>
<reference key="2">
    <citation type="journal article" date="2003" name="Science">
        <title>A genomic view of the human-Bacteroides thetaiotaomicron symbiosis.</title>
        <authorList>
            <person name="Xu J."/>
            <person name="Bjursell M.K."/>
            <person name="Himrod J."/>
            <person name="Deng S."/>
            <person name="Carmichael L.K."/>
            <person name="Chiang H.C."/>
            <person name="Hooper L.V."/>
            <person name="Gordon J.I."/>
        </authorList>
    </citation>
    <scope>NUCLEOTIDE SEQUENCE [LARGE SCALE GENOMIC DNA]</scope>
    <source>
        <strain>ATCC 29148 / DSM 2079 / JCM 5827 / CCUG 10774 / NCTC 10582 / VPI-5482 / E50</strain>
    </source>
</reference>
<gene>
    <name evidence="1" type="primary">rpsP</name>
    <name type="ordered locus">BT_1271</name>
</gene>
<name>RS16_BACTN</name>